<evidence type="ECO:0000255" key="1">
    <source>
        <dbReference type="HAMAP-Rule" id="MF_00059"/>
    </source>
</evidence>
<accession>A8GT45</accession>
<sequence>MLSLSKNWNTLIKPNKVAYENFPETNNKAKIVVEPLERGFGLTLGNAMRRVLLSSLQGAAITSIKIPAIEHEFSSIPGVKEDVSEVILNIKGIEVKMHVAEKRIMKLKATGPCVVTAGMIETGHDVEILNPDHVICDLAKDKQLEMELTCKVGKGYVLSTNNYEDNLPIGEIAIDALFNPVKSVTYKVENTRVGQVTDYDKLIMFVETNGAVLPEMAVGLAARILQEQLQLFISFEEQEEDKQVKTDALPFSPYLLKRVDELELSVRSANCLKNDNIIYIGDLVKRTEADMLRTPNFGRKSLNEIKEILAKFNLRFGMDVPDWPPENMQELSKRYEDSYN</sequence>
<comment type="function">
    <text evidence="1">DNA-dependent RNA polymerase catalyzes the transcription of DNA into RNA using the four ribonucleoside triphosphates as substrates.</text>
</comment>
<comment type="catalytic activity">
    <reaction evidence="1">
        <text>RNA(n) + a ribonucleoside 5'-triphosphate = RNA(n+1) + diphosphate</text>
        <dbReference type="Rhea" id="RHEA:21248"/>
        <dbReference type="Rhea" id="RHEA-COMP:14527"/>
        <dbReference type="Rhea" id="RHEA-COMP:17342"/>
        <dbReference type="ChEBI" id="CHEBI:33019"/>
        <dbReference type="ChEBI" id="CHEBI:61557"/>
        <dbReference type="ChEBI" id="CHEBI:140395"/>
        <dbReference type="EC" id="2.7.7.6"/>
    </reaction>
</comment>
<comment type="subunit">
    <text evidence="1">Homodimer. The RNAP catalytic core consists of 2 alpha, 1 beta, 1 beta' and 1 omega subunit. When a sigma factor is associated with the core the holoenzyme is formed, which can initiate transcription.</text>
</comment>
<comment type="domain">
    <text evidence="1">The N-terminal domain is essential for RNAP assembly and basal transcription, whereas the C-terminal domain is involved in interaction with transcriptional regulators and with upstream promoter elements.</text>
</comment>
<comment type="similarity">
    <text evidence="1">Belongs to the RNA polymerase alpha chain family.</text>
</comment>
<dbReference type="EC" id="2.7.7.6" evidence="1"/>
<dbReference type="EMBL" id="CP000848">
    <property type="protein sequence ID" value="ABV76570.1"/>
    <property type="molecule type" value="Genomic_DNA"/>
</dbReference>
<dbReference type="RefSeq" id="WP_012151133.1">
    <property type="nucleotide sequence ID" value="NZ_CP121767.1"/>
</dbReference>
<dbReference type="SMR" id="A8GT45"/>
<dbReference type="GeneID" id="79937646"/>
<dbReference type="KEGG" id="rri:A1G_05435"/>
<dbReference type="HOGENOM" id="CLU_053084_0_0_5"/>
<dbReference type="Proteomes" id="UP000006832">
    <property type="component" value="Chromosome"/>
</dbReference>
<dbReference type="GO" id="GO:0005737">
    <property type="term" value="C:cytoplasm"/>
    <property type="evidence" value="ECO:0007669"/>
    <property type="project" value="UniProtKB-ARBA"/>
</dbReference>
<dbReference type="GO" id="GO:0000428">
    <property type="term" value="C:DNA-directed RNA polymerase complex"/>
    <property type="evidence" value="ECO:0007669"/>
    <property type="project" value="UniProtKB-KW"/>
</dbReference>
<dbReference type="GO" id="GO:0003677">
    <property type="term" value="F:DNA binding"/>
    <property type="evidence" value="ECO:0007669"/>
    <property type="project" value="UniProtKB-UniRule"/>
</dbReference>
<dbReference type="GO" id="GO:0003899">
    <property type="term" value="F:DNA-directed RNA polymerase activity"/>
    <property type="evidence" value="ECO:0007669"/>
    <property type="project" value="UniProtKB-UniRule"/>
</dbReference>
<dbReference type="GO" id="GO:0046983">
    <property type="term" value="F:protein dimerization activity"/>
    <property type="evidence" value="ECO:0007669"/>
    <property type="project" value="InterPro"/>
</dbReference>
<dbReference type="GO" id="GO:0006351">
    <property type="term" value="P:DNA-templated transcription"/>
    <property type="evidence" value="ECO:0007669"/>
    <property type="project" value="UniProtKB-UniRule"/>
</dbReference>
<dbReference type="CDD" id="cd06928">
    <property type="entry name" value="RNAP_alpha_NTD"/>
    <property type="match status" value="1"/>
</dbReference>
<dbReference type="FunFam" id="1.10.150.20:FF:000001">
    <property type="entry name" value="DNA-directed RNA polymerase subunit alpha"/>
    <property type="match status" value="1"/>
</dbReference>
<dbReference type="FunFam" id="2.170.120.12:FF:000001">
    <property type="entry name" value="DNA-directed RNA polymerase subunit alpha"/>
    <property type="match status" value="1"/>
</dbReference>
<dbReference type="Gene3D" id="1.10.150.20">
    <property type="entry name" value="5' to 3' exonuclease, C-terminal subdomain"/>
    <property type="match status" value="1"/>
</dbReference>
<dbReference type="Gene3D" id="2.170.120.12">
    <property type="entry name" value="DNA-directed RNA polymerase, insert domain"/>
    <property type="match status" value="1"/>
</dbReference>
<dbReference type="Gene3D" id="3.30.1360.10">
    <property type="entry name" value="RNA polymerase, RBP11-like subunit"/>
    <property type="match status" value="1"/>
</dbReference>
<dbReference type="HAMAP" id="MF_00059">
    <property type="entry name" value="RNApol_bact_RpoA"/>
    <property type="match status" value="1"/>
</dbReference>
<dbReference type="InterPro" id="IPR011262">
    <property type="entry name" value="DNA-dir_RNA_pol_insert"/>
</dbReference>
<dbReference type="InterPro" id="IPR011263">
    <property type="entry name" value="DNA-dir_RNA_pol_RpoA/D/Rpb3"/>
</dbReference>
<dbReference type="InterPro" id="IPR011773">
    <property type="entry name" value="DNA-dir_RpoA"/>
</dbReference>
<dbReference type="InterPro" id="IPR036603">
    <property type="entry name" value="RBP11-like"/>
</dbReference>
<dbReference type="InterPro" id="IPR011260">
    <property type="entry name" value="RNAP_asu_C"/>
</dbReference>
<dbReference type="InterPro" id="IPR036643">
    <property type="entry name" value="RNApol_insert_sf"/>
</dbReference>
<dbReference type="NCBIfam" id="NF003513">
    <property type="entry name" value="PRK05182.1-2"/>
    <property type="match status" value="1"/>
</dbReference>
<dbReference type="NCBIfam" id="NF003519">
    <property type="entry name" value="PRK05182.2-5"/>
    <property type="match status" value="1"/>
</dbReference>
<dbReference type="NCBIfam" id="TIGR02027">
    <property type="entry name" value="rpoA"/>
    <property type="match status" value="1"/>
</dbReference>
<dbReference type="Pfam" id="PF01000">
    <property type="entry name" value="RNA_pol_A_bac"/>
    <property type="match status" value="1"/>
</dbReference>
<dbReference type="Pfam" id="PF03118">
    <property type="entry name" value="RNA_pol_A_CTD"/>
    <property type="match status" value="1"/>
</dbReference>
<dbReference type="Pfam" id="PF01193">
    <property type="entry name" value="RNA_pol_L"/>
    <property type="match status" value="1"/>
</dbReference>
<dbReference type="SMART" id="SM00662">
    <property type="entry name" value="RPOLD"/>
    <property type="match status" value="1"/>
</dbReference>
<dbReference type="SUPFAM" id="SSF47789">
    <property type="entry name" value="C-terminal domain of RNA polymerase alpha subunit"/>
    <property type="match status" value="1"/>
</dbReference>
<dbReference type="SUPFAM" id="SSF56553">
    <property type="entry name" value="Insert subdomain of RNA polymerase alpha subunit"/>
    <property type="match status" value="1"/>
</dbReference>
<dbReference type="SUPFAM" id="SSF55257">
    <property type="entry name" value="RBP11-like subunits of RNA polymerase"/>
    <property type="match status" value="1"/>
</dbReference>
<protein>
    <recommendedName>
        <fullName evidence="1">DNA-directed RNA polymerase subunit alpha</fullName>
        <shortName evidence="1">RNAP subunit alpha</shortName>
        <ecNumber evidence="1">2.7.7.6</ecNumber>
    </recommendedName>
    <alternativeName>
        <fullName evidence="1">RNA polymerase subunit alpha</fullName>
    </alternativeName>
    <alternativeName>
        <fullName evidence="1">Transcriptase subunit alpha</fullName>
    </alternativeName>
</protein>
<proteinExistence type="inferred from homology"/>
<reference key="1">
    <citation type="submission" date="2007-09" db="EMBL/GenBank/DDBJ databases">
        <title>Complete genome sequence of Rickettsia rickettsii.</title>
        <authorList>
            <person name="Madan A."/>
            <person name="Fahey J."/>
            <person name="Helton E."/>
            <person name="Ketteman M."/>
            <person name="Madan A."/>
            <person name="Rodrigues S."/>
            <person name="Sanchez A."/>
            <person name="Dasch G."/>
            <person name="Eremeeva M."/>
        </authorList>
    </citation>
    <scope>NUCLEOTIDE SEQUENCE [LARGE SCALE GENOMIC DNA]</scope>
    <source>
        <strain>Sheila Smith</strain>
    </source>
</reference>
<organism>
    <name type="scientific">Rickettsia rickettsii (strain Sheila Smith)</name>
    <dbReference type="NCBI Taxonomy" id="392021"/>
    <lineage>
        <taxon>Bacteria</taxon>
        <taxon>Pseudomonadati</taxon>
        <taxon>Pseudomonadota</taxon>
        <taxon>Alphaproteobacteria</taxon>
        <taxon>Rickettsiales</taxon>
        <taxon>Rickettsiaceae</taxon>
        <taxon>Rickettsieae</taxon>
        <taxon>Rickettsia</taxon>
        <taxon>spotted fever group</taxon>
    </lineage>
</organism>
<gene>
    <name evidence="1" type="primary">rpoA</name>
    <name type="ordered locus">A1G_05435</name>
</gene>
<keyword id="KW-0240">DNA-directed RNA polymerase</keyword>
<keyword id="KW-0548">Nucleotidyltransferase</keyword>
<keyword id="KW-0804">Transcription</keyword>
<keyword id="KW-0808">Transferase</keyword>
<feature type="chain" id="PRO_1000007694" description="DNA-directed RNA polymerase subunit alpha">
    <location>
        <begin position="1"/>
        <end position="340"/>
    </location>
</feature>
<feature type="region of interest" description="Alpha N-terminal domain (alpha-NTD)" evidence="1">
    <location>
        <begin position="1"/>
        <end position="236"/>
    </location>
</feature>
<feature type="region of interest" description="Alpha C-terminal domain (alpha-CTD)" evidence="1">
    <location>
        <begin position="251"/>
        <end position="340"/>
    </location>
</feature>
<name>RPOA_RICRS</name>